<name>RS3_BACLD</name>
<reference key="1">
    <citation type="journal article" date="2004" name="J. Mol. Microbiol. Biotechnol.">
        <title>The complete genome sequence of Bacillus licheniformis DSM13, an organism with great industrial potential.</title>
        <authorList>
            <person name="Veith B."/>
            <person name="Herzberg C."/>
            <person name="Steckel S."/>
            <person name="Feesche J."/>
            <person name="Maurer K.H."/>
            <person name="Ehrenreich P."/>
            <person name="Baeumer S."/>
            <person name="Henne A."/>
            <person name="Liesegang H."/>
            <person name="Merkl R."/>
            <person name="Ehrenreich A."/>
            <person name="Gottschalk G."/>
        </authorList>
    </citation>
    <scope>NUCLEOTIDE SEQUENCE [LARGE SCALE GENOMIC DNA]</scope>
    <source>
        <strain>ATCC 14580 / DSM 13 / JCM 2505 / CCUG 7422 / NBRC 12200 / NCIMB 9375 / NCTC 10341 / NRRL NRS-1264 / Gibson 46</strain>
    </source>
</reference>
<reference key="2">
    <citation type="journal article" date="2004" name="Genome Biol.">
        <title>Complete genome sequence of the industrial bacterium Bacillus licheniformis and comparisons with closely related Bacillus species.</title>
        <authorList>
            <person name="Rey M.W."/>
            <person name="Ramaiya P."/>
            <person name="Nelson B.A."/>
            <person name="Brody-Karpin S.D."/>
            <person name="Zaretsky E.J."/>
            <person name="Tang M."/>
            <person name="Lopez de Leon A."/>
            <person name="Xiang H."/>
            <person name="Gusti V."/>
            <person name="Clausen I.G."/>
            <person name="Olsen P.B."/>
            <person name="Rasmussen M.D."/>
            <person name="Andersen J.T."/>
            <person name="Joergensen P.L."/>
            <person name="Larsen T.S."/>
            <person name="Sorokin A."/>
            <person name="Bolotin A."/>
            <person name="Lapidus A."/>
            <person name="Galleron N."/>
            <person name="Ehrlich S.D."/>
            <person name="Berka R.M."/>
        </authorList>
    </citation>
    <scope>NUCLEOTIDE SEQUENCE [LARGE SCALE GENOMIC DNA]</scope>
    <source>
        <strain>ATCC 14580 / DSM 13 / JCM 2505 / CCUG 7422 / NBRC 12200 / NCIMB 9375 / NCTC 10341 / NRRL NRS-1264 / Gibson 46</strain>
    </source>
</reference>
<evidence type="ECO:0000255" key="1">
    <source>
        <dbReference type="HAMAP-Rule" id="MF_01309"/>
    </source>
</evidence>
<evidence type="ECO:0000305" key="2"/>
<keyword id="KW-1185">Reference proteome</keyword>
<keyword id="KW-0687">Ribonucleoprotein</keyword>
<keyword id="KW-0689">Ribosomal protein</keyword>
<keyword id="KW-0694">RNA-binding</keyword>
<keyword id="KW-0699">rRNA-binding</keyword>
<sequence length="218" mass="24349">MGQKVNPVGLRIGVIRDWESKWYAGKDYADFLHEDLKIREFINQRLSDASVSKVEIERAANRVNITIHTAKPGMVIGKGGSEVEALRKALNSLTGKRVHINILEIKRADLDAQLVADNIARQLENRISFRRAQKQQIQRTMRAGAQGIKTMVSGRLGGADIARSEYYSEGTVPLHTLRADIDYATSEADTTYGKLGVKVWIYRGEVLPTKKKTEEGGK</sequence>
<feature type="chain" id="PRO_0000230679" description="Small ribosomal subunit protein uS3">
    <location>
        <begin position="1"/>
        <end position="218"/>
    </location>
</feature>
<feature type="domain" description="KH type-2" evidence="1">
    <location>
        <begin position="38"/>
        <end position="106"/>
    </location>
</feature>
<comment type="function">
    <text evidence="1">Binds the lower part of the 30S subunit head. Binds mRNA in the 70S ribosome, positioning it for translation.</text>
</comment>
<comment type="subunit">
    <text evidence="1">Part of the 30S ribosomal subunit. Forms a tight complex with proteins S10 and S14.</text>
</comment>
<comment type="similarity">
    <text evidence="1">Belongs to the universal ribosomal protein uS3 family.</text>
</comment>
<protein>
    <recommendedName>
        <fullName evidence="1">Small ribosomal subunit protein uS3</fullName>
    </recommendedName>
    <alternativeName>
        <fullName evidence="2">30S ribosomal protein S3</fullName>
    </alternativeName>
</protein>
<dbReference type="EMBL" id="AE017333">
    <property type="protein sequence ID" value="AAU39113.1"/>
    <property type="molecule type" value="Genomic_DNA"/>
</dbReference>
<dbReference type="EMBL" id="CP000002">
    <property type="protein sequence ID" value="AAU21768.1"/>
    <property type="molecule type" value="Genomic_DNA"/>
</dbReference>
<dbReference type="RefSeq" id="WP_003178339.1">
    <property type="nucleotide sequence ID" value="NC_006322.1"/>
</dbReference>
<dbReference type="SMR" id="Q65PA1"/>
<dbReference type="STRING" id="279010.BL01046"/>
<dbReference type="GeneID" id="92858897"/>
<dbReference type="KEGG" id="bld:BLi00139"/>
<dbReference type="KEGG" id="bli:BL01046"/>
<dbReference type="eggNOG" id="COG0092">
    <property type="taxonomic scope" value="Bacteria"/>
</dbReference>
<dbReference type="HOGENOM" id="CLU_058591_0_2_9"/>
<dbReference type="Proteomes" id="UP000000606">
    <property type="component" value="Chromosome"/>
</dbReference>
<dbReference type="GO" id="GO:0022627">
    <property type="term" value="C:cytosolic small ribosomal subunit"/>
    <property type="evidence" value="ECO:0007669"/>
    <property type="project" value="TreeGrafter"/>
</dbReference>
<dbReference type="GO" id="GO:0003729">
    <property type="term" value="F:mRNA binding"/>
    <property type="evidence" value="ECO:0007669"/>
    <property type="project" value="UniProtKB-UniRule"/>
</dbReference>
<dbReference type="GO" id="GO:0019843">
    <property type="term" value="F:rRNA binding"/>
    <property type="evidence" value="ECO:0007669"/>
    <property type="project" value="UniProtKB-UniRule"/>
</dbReference>
<dbReference type="GO" id="GO:0003735">
    <property type="term" value="F:structural constituent of ribosome"/>
    <property type="evidence" value="ECO:0007669"/>
    <property type="project" value="InterPro"/>
</dbReference>
<dbReference type="GO" id="GO:0006412">
    <property type="term" value="P:translation"/>
    <property type="evidence" value="ECO:0007669"/>
    <property type="project" value="UniProtKB-UniRule"/>
</dbReference>
<dbReference type="CDD" id="cd02412">
    <property type="entry name" value="KH-II_30S_S3"/>
    <property type="match status" value="1"/>
</dbReference>
<dbReference type="FunFam" id="3.30.1140.32:FF:000001">
    <property type="entry name" value="30S ribosomal protein S3"/>
    <property type="match status" value="1"/>
</dbReference>
<dbReference type="FunFam" id="3.30.300.20:FF:000001">
    <property type="entry name" value="30S ribosomal protein S3"/>
    <property type="match status" value="1"/>
</dbReference>
<dbReference type="Gene3D" id="3.30.300.20">
    <property type="match status" value="1"/>
</dbReference>
<dbReference type="Gene3D" id="3.30.1140.32">
    <property type="entry name" value="Ribosomal protein S3, C-terminal domain"/>
    <property type="match status" value="1"/>
</dbReference>
<dbReference type="HAMAP" id="MF_01309_B">
    <property type="entry name" value="Ribosomal_uS3_B"/>
    <property type="match status" value="1"/>
</dbReference>
<dbReference type="InterPro" id="IPR004087">
    <property type="entry name" value="KH_dom"/>
</dbReference>
<dbReference type="InterPro" id="IPR015946">
    <property type="entry name" value="KH_dom-like_a/b"/>
</dbReference>
<dbReference type="InterPro" id="IPR004044">
    <property type="entry name" value="KH_dom_type_2"/>
</dbReference>
<dbReference type="InterPro" id="IPR009019">
    <property type="entry name" value="KH_sf_prok-type"/>
</dbReference>
<dbReference type="InterPro" id="IPR036419">
    <property type="entry name" value="Ribosomal_S3_C_sf"/>
</dbReference>
<dbReference type="InterPro" id="IPR005704">
    <property type="entry name" value="Ribosomal_uS3_bac-typ"/>
</dbReference>
<dbReference type="InterPro" id="IPR001351">
    <property type="entry name" value="Ribosomal_uS3_C"/>
</dbReference>
<dbReference type="InterPro" id="IPR018280">
    <property type="entry name" value="Ribosomal_uS3_CS"/>
</dbReference>
<dbReference type="NCBIfam" id="TIGR01009">
    <property type="entry name" value="rpsC_bact"/>
    <property type="match status" value="1"/>
</dbReference>
<dbReference type="PANTHER" id="PTHR11760">
    <property type="entry name" value="30S/40S RIBOSOMAL PROTEIN S3"/>
    <property type="match status" value="1"/>
</dbReference>
<dbReference type="PANTHER" id="PTHR11760:SF19">
    <property type="entry name" value="SMALL RIBOSOMAL SUBUNIT PROTEIN US3C"/>
    <property type="match status" value="1"/>
</dbReference>
<dbReference type="Pfam" id="PF07650">
    <property type="entry name" value="KH_2"/>
    <property type="match status" value="1"/>
</dbReference>
<dbReference type="Pfam" id="PF00189">
    <property type="entry name" value="Ribosomal_S3_C"/>
    <property type="match status" value="1"/>
</dbReference>
<dbReference type="SMART" id="SM00322">
    <property type="entry name" value="KH"/>
    <property type="match status" value="1"/>
</dbReference>
<dbReference type="SUPFAM" id="SSF54814">
    <property type="entry name" value="Prokaryotic type KH domain (KH-domain type II)"/>
    <property type="match status" value="1"/>
</dbReference>
<dbReference type="SUPFAM" id="SSF54821">
    <property type="entry name" value="Ribosomal protein S3 C-terminal domain"/>
    <property type="match status" value="1"/>
</dbReference>
<dbReference type="PROSITE" id="PS50823">
    <property type="entry name" value="KH_TYPE_2"/>
    <property type="match status" value="1"/>
</dbReference>
<dbReference type="PROSITE" id="PS00548">
    <property type="entry name" value="RIBOSOMAL_S3"/>
    <property type="match status" value="1"/>
</dbReference>
<proteinExistence type="inferred from homology"/>
<organism>
    <name type="scientific">Bacillus licheniformis (strain ATCC 14580 / DSM 13 / JCM 2505 / CCUG 7422 / NBRC 12200 / NCIMB 9375 / NCTC 10341 / NRRL NRS-1264 / Gibson 46)</name>
    <dbReference type="NCBI Taxonomy" id="279010"/>
    <lineage>
        <taxon>Bacteria</taxon>
        <taxon>Bacillati</taxon>
        <taxon>Bacillota</taxon>
        <taxon>Bacilli</taxon>
        <taxon>Bacillales</taxon>
        <taxon>Bacillaceae</taxon>
        <taxon>Bacillus</taxon>
    </lineage>
</organism>
<accession>Q65PA1</accession>
<accession>Q62ZP0</accession>
<gene>
    <name evidence="1" type="primary">rpsC</name>
    <name type="ordered locus">BLi00139</name>
    <name type="ordered locus">BL01046</name>
</gene>